<evidence type="ECO:0000255" key="1">
    <source>
        <dbReference type="HAMAP-Rule" id="MF_00384"/>
    </source>
</evidence>
<proteinExistence type="inferred from homology"/>
<keyword id="KW-0028">Amino-acid biosynthesis</keyword>
<keyword id="KW-0067">ATP-binding</keyword>
<keyword id="KW-0963">Cytoplasm</keyword>
<keyword id="KW-0418">Kinase</keyword>
<keyword id="KW-0547">Nucleotide-binding</keyword>
<keyword id="KW-0791">Threonine biosynthesis</keyword>
<keyword id="KW-0808">Transferase</keyword>
<organism>
    <name type="scientific">Streptococcus pneumoniae (strain 70585)</name>
    <dbReference type="NCBI Taxonomy" id="488221"/>
    <lineage>
        <taxon>Bacteria</taxon>
        <taxon>Bacillati</taxon>
        <taxon>Bacillota</taxon>
        <taxon>Bacilli</taxon>
        <taxon>Lactobacillales</taxon>
        <taxon>Streptococcaceae</taxon>
        <taxon>Streptococcus</taxon>
    </lineage>
</organism>
<dbReference type="EC" id="2.7.1.39" evidence="1"/>
<dbReference type="EMBL" id="CP000918">
    <property type="protein sequence ID" value="ACO16567.1"/>
    <property type="molecule type" value="Genomic_DNA"/>
</dbReference>
<dbReference type="RefSeq" id="WP_000692438.1">
    <property type="nucleotide sequence ID" value="NC_012468.1"/>
</dbReference>
<dbReference type="SMR" id="C1C7W1"/>
<dbReference type="GeneID" id="45653380"/>
<dbReference type="KEGG" id="snm:SP70585_1399"/>
<dbReference type="HOGENOM" id="CLU_041243_0_0_9"/>
<dbReference type="UniPathway" id="UPA00050">
    <property type="reaction ID" value="UER00064"/>
</dbReference>
<dbReference type="Proteomes" id="UP000002211">
    <property type="component" value="Chromosome"/>
</dbReference>
<dbReference type="GO" id="GO:0005737">
    <property type="term" value="C:cytoplasm"/>
    <property type="evidence" value="ECO:0007669"/>
    <property type="project" value="UniProtKB-SubCell"/>
</dbReference>
<dbReference type="GO" id="GO:0005524">
    <property type="term" value="F:ATP binding"/>
    <property type="evidence" value="ECO:0007669"/>
    <property type="project" value="UniProtKB-UniRule"/>
</dbReference>
<dbReference type="GO" id="GO:0004413">
    <property type="term" value="F:homoserine kinase activity"/>
    <property type="evidence" value="ECO:0007669"/>
    <property type="project" value="UniProtKB-UniRule"/>
</dbReference>
<dbReference type="GO" id="GO:0009088">
    <property type="term" value="P:threonine biosynthetic process"/>
    <property type="evidence" value="ECO:0007669"/>
    <property type="project" value="UniProtKB-UniRule"/>
</dbReference>
<dbReference type="Gene3D" id="3.30.230.10">
    <property type="match status" value="1"/>
</dbReference>
<dbReference type="Gene3D" id="3.30.70.890">
    <property type="entry name" value="GHMP kinase, C-terminal domain"/>
    <property type="match status" value="1"/>
</dbReference>
<dbReference type="HAMAP" id="MF_00384">
    <property type="entry name" value="Homoser_kinase"/>
    <property type="match status" value="1"/>
</dbReference>
<dbReference type="InterPro" id="IPR013750">
    <property type="entry name" value="GHMP_kinase_C_dom"/>
</dbReference>
<dbReference type="InterPro" id="IPR036554">
    <property type="entry name" value="GHMP_kinase_C_sf"/>
</dbReference>
<dbReference type="InterPro" id="IPR006204">
    <property type="entry name" value="GHMP_kinase_N_dom"/>
</dbReference>
<dbReference type="InterPro" id="IPR006203">
    <property type="entry name" value="GHMP_knse_ATP-bd_CS"/>
</dbReference>
<dbReference type="InterPro" id="IPR000870">
    <property type="entry name" value="Homoserine_kinase"/>
</dbReference>
<dbReference type="InterPro" id="IPR020568">
    <property type="entry name" value="Ribosomal_Su5_D2-typ_SF"/>
</dbReference>
<dbReference type="InterPro" id="IPR014721">
    <property type="entry name" value="Ribsml_uS5_D2-typ_fold_subgr"/>
</dbReference>
<dbReference type="NCBIfam" id="TIGR00191">
    <property type="entry name" value="thrB"/>
    <property type="match status" value="1"/>
</dbReference>
<dbReference type="PANTHER" id="PTHR20861:SF1">
    <property type="entry name" value="HOMOSERINE KINASE"/>
    <property type="match status" value="1"/>
</dbReference>
<dbReference type="PANTHER" id="PTHR20861">
    <property type="entry name" value="HOMOSERINE/4-DIPHOSPHOCYTIDYL-2-C-METHYL-D-ERYTHRITOL KINASE"/>
    <property type="match status" value="1"/>
</dbReference>
<dbReference type="Pfam" id="PF08544">
    <property type="entry name" value="GHMP_kinases_C"/>
    <property type="match status" value="1"/>
</dbReference>
<dbReference type="Pfam" id="PF00288">
    <property type="entry name" value="GHMP_kinases_N"/>
    <property type="match status" value="1"/>
</dbReference>
<dbReference type="PIRSF" id="PIRSF000676">
    <property type="entry name" value="Homoser_kin"/>
    <property type="match status" value="1"/>
</dbReference>
<dbReference type="PRINTS" id="PR00958">
    <property type="entry name" value="HOMSERKINASE"/>
</dbReference>
<dbReference type="SUPFAM" id="SSF55060">
    <property type="entry name" value="GHMP Kinase, C-terminal domain"/>
    <property type="match status" value="1"/>
</dbReference>
<dbReference type="SUPFAM" id="SSF54211">
    <property type="entry name" value="Ribosomal protein S5 domain 2-like"/>
    <property type="match status" value="1"/>
</dbReference>
<dbReference type="PROSITE" id="PS00627">
    <property type="entry name" value="GHMP_KINASES_ATP"/>
    <property type="match status" value="1"/>
</dbReference>
<reference key="1">
    <citation type="journal article" date="2010" name="Genome Biol.">
        <title>Structure and dynamics of the pan-genome of Streptococcus pneumoniae and closely related species.</title>
        <authorList>
            <person name="Donati C."/>
            <person name="Hiller N.L."/>
            <person name="Tettelin H."/>
            <person name="Muzzi A."/>
            <person name="Croucher N.J."/>
            <person name="Angiuoli S.V."/>
            <person name="Oggioni M."/>
            <person name="Dunning Hotopp J.C."/>
            <person name="Hu F.Z."/>
            <person name="Riley D.R."/>
            <person name="Covacci A."/>
            <person name="Mitchell T.J."/>
            <person name="Bentley S.D."/>
            <person name="Kilian M."/>
            <person name="Ehrlich G.D."/>
            <person name="Rappuoli R."/>
            <person name="Moxon E.R."/>
            <person name="Masignani V."/>
        </authorList>
    </citation>
    <scope>NUCLEOTIDE SEQUENCE [LARGE SCALE GENOMIC DNA]</scope>
    <source>
        <strain>70585</strain>
    </source>
</reference>
<comment type="function">
    <text evidence="1">Catalyzes the ATP-dependent phosphorylation of L-homoserine to L-homoserine phosphate.</text>
</comment>
<comment type="catalytic activity">
    <reaction evidence="1">
        <text>L-homoserine + ATP = O-phospho-L-homoserine + ADP + H(+)</text>
        <dbReference type="Rhea" id="RHEA:13985"/>
        <dbReference type="ChEBI" id="CHEBI:15378"/>
        <dbReference type="ChEBI" id="CHEBI:30616"/>
        <dbReference type="ChEBI" id="CHEBI:57476"/>
        <dbReference type="ChEBI" id="CHEBI:57590"/>
        <dbReference type="ChEBI" id="CHEBI:456216"/>
        <dbReference type="EC" id="2.7.1.39"/>
    </reaction>
</comment>
<comment type="pathway">
    <text evidence="1">Amino-acid biosynthesis; L-threonine biosynthesis; L-threonine from L-aspartate: step 4/5.</text>
</comment>
<comment type="subcellular location">
    <subcellularLocation>
        <location evidence="1">Cytoplasm</location>
    </subcellularLocation>
</comment>
<comment type="similarity">
    <text evidence="1">Belongs to the GHMP kinase family. Homoserine kinase subfamily.</text>
</comment>
<protein>
    <recommendedName>
        <fullName evidence="1">Homoserine kinase</fullName>
        <shortName evidence="1">HK</shortName>
        <shortName evidence="1">HSK</shortName>
        <ecNumber evidence="1">2.7.1.39</ecNumber>
    </recommendedName>
</protein>
<gene>
    <name evidence="1" type="primary">thrB</name>
    <name type="ordered locus">SP70585_1399</name>
</gene>
<accession>C1C7W1</accession>
<name>KHSE_STRP7</name>
<feature type="chain" id="PRO_1000134262" description="Homoserine kinase">
    <location>
        <begin position="1"/>
        <end position="289"/>
    </location>
</feature>
<feature type="binding site" evidence="1">
    <location>
        <begin position="79"/>
        <end position="89"/>
    </location>
    <ligand>
        <name>ATP</name>
        <dbReference type="ChEBI" id="CHEBI:30616"/>
    </ligand>
</feature>
<sequence>MKIIVPATSANIGPGFDSVGVAVTKYLQIEVCEERDEWLIEHQIGKWIPHDERNLLLKIALQIVPDLQPRRLKMTSDVPLARGLGSSSSVIVAGIELANQLGQLNLSDHEKLQLATKIEGHPDNVAPAIYGNLVIASSVEGQVSAIVADFPECDFLAYIPNYELRTRDSRSVLPKKLSYKEAVAASSIANVAVAALLAGDMVTAGQAIEGDLFHERYRQDLVREFAMIKQVTKENGAYATYLSGAGPTVMVLASHDKMPTIKAELEKQPFKGKLHDLRVDTQGVRVEAK</sequence>